<comment type="function">
    <text evidence="1">Part of the ABC transporter complex PotABCD involved in spermidine/putrescine import. Responsible for energy coupling to the transport system.</text>
</comment>
<comment type="catalytic activity">
    <reaction evidence="1">
        <text>ATP + H2O + polyamine-[polyamine-binding protein]Side 1 = ADP + phosphate + polyamineSide 2 + [polyamine-binding protein]Side 1.</text>
        <dbReference type="EC" id="7.6.2.11"/>
    </reaction>
</comment>
<comment type="subunit">
    <text evidence="1">The complex is composed of two ATP-binding proteins (PotA), two transmembrane proteins (PotB and PotC) and a solute-binding protein (PotD).</text>
</comment>
<comment type="subcellular location">
    <subcellularLocation>
        <location evidence="1">Cell inner membrane</location>
        <topology evidence="1">Peripheral membrane protein</topology>
    </subcellularLocation>
</comment>
<comment type="similarity">
    <text evidence="1">Belongs to the ABC transporter superfamily. Spermidine/putrescine importer (TC 3.A.1.11.1) family.</text>
</comment>
<comment type="sequence caution" evidence="2">
    <conflict type="erroneous initiation">
        <sequence resource="EMBL-CDS" id="AAC22991"/>
    </conflict>
</comment>
<gene>
    <name evidence="1" type="primary">potA</name>
    <name type="ordered locus">HI_1347</name>
</gene>
<feature type="chain" id="PRO_0000092749" description="Spermidine/putrescine import ATP-binding protein PotA">
    <location>
        <begin position="1"/>
        <end position="372"/>
    </location>
</feature>
<feature type="domain" description="ABC transporter" evidence="1">
    <location>
        <begin position="11"/>
        <end position="241"/>
    </location>
</feature>
<feature type="binding site" evidence="1">
    <location>
        <begin position="43"/>
        <end position="50"/>
    </location>
    <ligand>
        <name>ATP</name>
        <dbReference type="ChEBI" id="CHEBI:30616"/>
    </ligand>
</feature>
<sequence length="372" mass="42408">MENQLQNKPIIELRSIKKSYGSNTIINDFNLTINNGEFVTILGPSGCGKTTVLRLLAGLEELDSGSIILDGEDITNVPAEKRHINTVFQSYALFPHMTIFENVAFGLRMQKVPNEEIKPRVLEALRMVQLEEMADRKPTQLSGGQQQRIAIARAVVNKPKVLLLDESLSALDYKLRKQMQQELKMLQRQLGITFIFVTHDQEEAITMSDRIVLLRKGKIAQDGSPREIYEDPANLFVARFIGEINVFEATVIERKSEQVVLANVEGRICDIYTDMPVEKDQKLQVLLRPEDIVIEELDENEHSKAIIGHIIDRTYKGMTLESTVEFDHNGMRVLVSEFFNEDDPHMDHSIGQRVGITWHEGWEVVLNDEDNQ</sequence>
<keyword id="KW-0067">ATP-binding</keyword>
<keyword id="KW-0997">Cell inner membrane</keyword>
<keyword id="KW-1003">Cell membrane</keyword>
<keyword id="KW-0472">Membrane</keyword>
<keyword id="KW-0547">Nucleotide-binding</keyword>
<keyword id="KW-1185">Reference proteome</keyword>
<keyword id="KW-1278">Translocase</keyword>
<keyword id="KW-0813">Transport</keyword>
<organism>
    <name type="scientific">Haemophilus influenzae (strain ATCC 51907 / DSM 11121 / KW20 / Rd)</name>
    <dbReference type="NCBI Taxonomy" id="71421"/>
    <lineage>
        <taxon>Bacteria</taxon>
        <taxon>Pseudomonadati</taxon>
        <taxon>Pseudomonadota</taxon>
        <taxon>Gammaproteobacteria</taxon>
        <taxon>Pasteurellales</taxon>
        <taxon>Pasteurellaceae</taxon>
        <taxon>Haemophilus</taxon>
    </lineage>
</organism>
<accession>P45171</accession>
<name>POTA_HAEIN</name>
<dbReference type="EC" id="7.6.2.11" evidence="1"/>
<dbReference type="EMBL" id="L42023">
    <property type="protein sequence ID" value="AAC22991.1"/>
    <property type="status" value="ALT_INIT"/>
    <property type="molecule type" value="Genomic_DNA"/>
</dbReference>
<dbReference type="PIR" id="B64118">
    <property type="entry name" value="B64118"/>
</dbReference>
<dbReference type="RefSeq" id="NP_439498.2">
    <property type="nucleotide sequence ID" value="NC_000907.1"/>
</dbReference>
<dbReference type="SMR" id="P45171"/>
<dbReference type="STRING" id="71421.HI_1347"/>
<dbReference type="EnsemblBacteria" id="AAC22991">
    <property type="protein sequence ID" value="AAC22991"/>
    <property type="gene ID" value="HI_1347"/>
</dbReference>
<dbReference type="KEGG" id="hin:HI_1347"/>
<dbReference type="PATRIC" id="fig|71421.8.peg.1399"/>
<dbReference type="eggNOG" id="COG3842">
    <property type="taxonomic scope" value="Bacteria"/>
</dbReference>
<dbReference type="HOGENOM" id="CLU_000604_1_1_6"/>
<dbReference type="OrthoDB" id="9802264at2"/>
<dbReference type="Proteomes" id="UP000000579">
    <property type="component" value="Chromosome"/>
</dbReference>
<dbReference type="GO" id="GO:0043190">
    <property type="term" value="C:ATP-binding cassette (ABC) transporter complex"/>
    <property type="evidence" value="ECO:0007669"/>
    <property type="project" value="InterPro"/>
</dbReference>
<dbReference type="GO" id="GO:0015594">
    <property type="term" value="F:ABC-type putrescine transporter activity"/>
    <property type="evidence" value="ECO:0007669"/>
    <property type="project" value="InterPro"/>
</dbReference>
<dbReference type="GO" id="GO:0005524">
    <property type="term" value="F:ATP binding"/>
    <property type="evidence" value="ECO:0007669"/>
    <property type="project" value="UniProtKB-KW"/>
</dbReference>
<dbReference type="GO" id="GO:0016887">
    <property type="term" value="F:ATP hydrolysis activity"/>
    <property type="evidence" value="ECO:0007669"/>
    <property type="project" value="InterPro"/>
</dbReference>
<dbReference type="CDD" id="cd03300">
    <property type="entry name" value="ABC_PotA_N"/>
    <property type="match status" value="1"/>
</dbReference>
<dbReference type="FunFam" id="3.40.50.300:FF:000133">
    <property type="entry name" value="Spermidine/putrescine import ATP-binding protein PotA"/>
    <property type="match status" value="1"/>
</dbReference>
<dbReference type="Gene3D" id="2.40.50.100">
    <property type="match status" value="1"/>
</dbReference>
<dbReference type="Gene3D" id="3.40.50.300">
    <property type="entry name" value="P-loop containing nucleotide triphosphate hydrolases"/>
    <property type="match status" value="1"/>
</dbReference>
<dbReference type="InterPro" id="IPR003593">
    <property type="entry name" value="AAA+_ATPase"/>
</dbReference>
<dbReference type="InterPro" id="IPR050093">
    <property type="entry name" value="ABC_SmlMolc_Importer"/>
</dbReference>
<dbReference type="InterPro" id="IPR003439">
    <property type="entry name" value="ABC_transporter-like_ATP-bd"/>
</dbReference>
<dbReference type="InterPro" id="IPR017871">
    <property type="entry name" value="ABC_transporter-like_CS"/>
</dbReference>
<dbReference type="InterPro" id="IPR008995">
    <property type="entry name" value="Mo/tungstate-bd_C_term_dom"/>
</dbReference>
<dbReference type="InterPro" id="IPR027417">
    <property type="entry name" value="P-loop_NTPase"/>
</dbReference>
<dbReference type="InterPro" id="IPR005893">
    <property type="entry name" value="PotA-like"/>
</dbReference>
<dbReference type="InterPro" id="IPR017879">
    <property type="entry name" value="PotA_ATP-bd"/>
</dbReference>
<dbReference type="InterPro" id="IPR013611">
    <property type="entry name" value="Transp-assoc_OB_typ2"/>
</dbReference>
<dbReference type="NCBIfam" id="TIGR01187">
    <property type="entry name" value="potA"/>
    <property type="match status" value="1"/>
</dbReference>
<dbReference type="NCBIfam" id="NF006987">
    <property type="entry name" value="PRK09452.1"/>
    <property type="match status" value="1"/>
</dbReference>
<dbReference type="PANTHER" id="PTHR42781">
    <property type="entry name" value="SPERMIDINE/PUTRESCINE IMPORT ATP-BINDING PROTEIN POTA"/>
    <property type="match status" value="1"/>
</dbReference>
<dbReference type="PANTHER" id="PTHR42781:SF4">
    <property type="entry name" value="SPERMIDINE_PUTRESCINE IMPORT ATP-BINDING PROTEIN POTA"/>
    <property type="match status" value="1"/>
</dbReference>
<dbReference type="Pfam" id="PF00005">
    <property type="entry name" value="ABC_tran"/>
    <property type="match status" value="1"/>
</dbReference>
<dbReference type="Pfam" id="PF08402">
    <property type="entry name" value="TOBE_2"/>
    <property type="match status" value="1"/>
</dbReference>
<dbReference type="SMART" id="SM00382">
    <property type="entry name" value="AAA"/>
    <property type="match status" value="1"/>
</dbReference>
<dbReference type="SUPFAM" id="SSF50331">
    <property type="entry name" value="MOP-like"/>
    <property type="match status" value="1"/>
</dbReference>
<dbReference type="SUPFAM" id="SSF52540">
    <property type="entry name" value="P-loop containing nucleoside triphosphate hydrolases"/>
    <property type="match status" value="1"/>
</dbReference>
<dbReference type="PROSITE" id="PS00211">
    <property type="entry name" value="ABC_TRANSPORTER_1"/>
    <property type="match status" value="1"/>
</dbReference>
<dbReference type="PROSITE" id="PS50893">
    <property type="entry name" value="ABC_TRANSPORTER_2"/>
    <property type="match status" value="1"/>
</dbReference>
<dbReference type="PROSITE" id="PS51305">
    <property type="entry name" value="POTA"/>
    <property type="match status" value="1"/>
</dbReference>
<proteinExistence type="inferred from homology"/>
<reference key="1">
    <citation type="journal article" date="1995" name="Science">
        <title>Whole-genome random sequencing and assembly of Haemophilus influenzae Rd.</title>
        <authorList>
            <person name="Fleischmann R.D."/>
            <person name="Adams M.D."/>
            <person name="White O."/>
            <person name="Clayton R.A."/>
            <person name="Kirkness E.F."/>
            <person name="Kerlavage A.R."/>
            <person name="Bult C.J."/>
            <person name="Tomb J.-F."/>
            <person name="Dougherty B.A."/>
            <person name="Merrick J.M."/>
            <person name="McKenney K."/>
            <person name="Sutton G.G."/>
            <person name="FitzHugh W."/>
            <person name="Fields C.A."/>
            <person name="Gocayne J.D."/>
            <person name="Scott J.D."/>
            <person name="Shirley R."/>
            <person name="Liu L.-I."/>
            <person name="Glodek A."/>
            <person name="Kelley J.M."/>
            <person name="Weidman J.F."/>
            <person name="Phillips C.A."/>
            <person name="Spriggs T."/>
            <person name="Hedblom E."/>
            <person name="Cotton M.D."/>
            <person name="Utterback T.R."/>
            <person name="Hanna M.C."/>
            <person name="Nguyen D.T."/>
            <person name="Saudek D.M."/>
            <person name="Brandon R.C."/>
            <person name="Fine L.D."/>
            <person name="Fritchman J.L."/>
            <person name="Fuhrmann J.L."/>
            <person name="Geoghagen N.S.M."/>
            <person name="Gnehm C.L."/>
            <person name="McDonald L.A."/>
            <person name="Small K.V."/>
            <person name="Fraser C.M."/>
            <person name="Smith H.O."/>
            <person name="Venter J.C."/>
        </authorList>
    </citation>
    <scope>NUCLEOTIDE SEQUENCE [LARGE SCALE GENOMIC DNA]</scope>
    <source>
        <strain>ATCC 51907 / DSM 11121 / KW20 / Rd</strain>
    </source>
</reference>
<protein>
    <recommendedName>
        <fullName evidence="1">Spermidine/putrescine import ATP-binding protein PotA</fullName>
        <ecNumber evidence="1">7.6.2.11</ecNumber>
    </recommendedName>
</protein>
<evidence type="ECO:0000255" key="1">
    <source>
        <dbReference type="HAMAP-Rule" id="MF_01726"/>
    </source>
</evidence>
<evidence type="ECO:0000305" key="2"/>